<protein>
    <recommendedName>
        <fullName evidence="1">Phosphoglucosamine mutase</fullName>
        <ecNumber evidence="1">5.4.2.10</ecNumber>
    </recommendedName>
</protein>
<organism>
    <name type="scientific">Streptococcus gordonii (strain Challis / ATCC 35105 / BCRC 15272 / CH1 / DL1 / V288)</name>
    <dbReference type="NCBI Taxonomy" id="467705"/>
    <lineage>
        <taxon>Bacteria</taxon>
        <taxon>Bacillati</taxon>
        <taxon>Bacillota</taxon>
        <taxon>Bacilli</taxon>
        <taxon>Lactobacillales</taxon>
        <taxon>Streptococcaceae</taxon>
        <taxon>Streptococcus</taxon>
    </lineage>
</organism>
<name>GLMM_STRGC</name>
<keyword id="KW-0413">Isomerase</keyword>
<keyword id="KW-0460">Magnesium</keyword>
<keyword id="KW-0479">Metal-binding</keyword>
<keyword id="KW-0597">Phosphoprotein</keyword>
<keyword id="KW-1185">Reference proteome</keyword>
<gene>
    <name evidence="1" type="primary">glmM</name>
    <name type="ordered locus">SGO_0889</name>
</gene>
<dbReference type="EC" id="5.4.2.10" evidence="1"/>
<dbReference type="EMBL" id="CP000725">
    <property type="protein sequence ID" value="ABV11050.1"/>
    <property type="molecule type" value="Genomic_DNA"/>
</dbReference>
<dbReference type="RefSeq" id="WP_008808904.1">
    <property type="nucleotide sequence ID" value="NC_009785.1"/>
</dbReference>
<dbReference type="SMR" id="A8AWM5"/>
<dbReference type="STRING" id="467705.SGO_0889"/>
<dbReference type="KEGG" id="sgo:SGO_0889"/>
<dbReference type="eggNOG" id="COG1109">
    <property type="taxonomic scope" value="Bacteria"/>
</dbReference>
<dbReference type="HOGENOM" id="CLU_016950_7_0_9"/>
<dbReference type="Proteomes" id="UP000001131">
    <property type="component" value="Chromosome"/>
</dbReference>
<dbReference type="GO" id="GO:0005829">
    <property type="term" value="C:cytosol"/>
    <property type="evidence" value="ECO:0007669"/>
    <property type="project" value="TreeGrafter"/>
</dbReference>
<dbReference type="GO" id="GO:0000287">
    <property type="term" value="F:magnesium ion binding"/>
    <property type="evidence" value="ECO:0007669"/>
    <property type="project" value="UniProtKB-UniRule"/>
</dbReference>
<dbReference type="GO" id="GO:0008966">
    <property type="term" value="F:phosphoglucosamine mutase activity"/>
    <property type="evidence" value="ECO:0007669"/>
    <property type="project" value="UniProtKB-UniRule"/>
</dbReference>
<dbReference type="GO" id="GO:0004615">
    <property type="term" value="F:phosphomannomutase activity"/>
    <property type="evidence" value="ECO:0007669"/>
    <property type="project" value="TreeGrafter"/>
</dbReference>
<dbReference type="GO" id="GO:0005975">
    <property type="term" value="P:carbohydrate metabolic process"/>
    <property type="evidence" value="ECO:0007669"/>
    <property type="project" value="InterPro"/>
</dbReference>
<dbReference type="GO" id="GO:0009252">
    <property type="term" value="P:peptidoglycan biosynthetic process"/>
    <property type="evidence" value="ECO:0007669"/>
    <property type="project" value="TreeGrafter"/>
</dbReference>
<dbReference type="GO" id="GO:0006048">
    <property type="term" value="P:UDP-N-acetylglucosamine biosynthetic process"/>
    <property type="evidence" value="ECO:0007669"/>
    <property type="project" value="TreeGrafter"/>
</dbReference>
<dbReference type="CDD" id="cd05802">
    <property type="entry name" value="GlmM"/>
    <property type="match status" value="1"/>
</dbReference>
<dbReference type="FunFam" id="3.30.310.50:FF:000001">
    <property type="entry name" value="Phosphoglucosamine mutase"/>
    <property type="match status" value="1"/>
</dbReference>
<dbReference type="FunFam" id="3.40.120.10:FF:000001">
    <property type="entry name" value="Phosphoglucosamine mutase"/>
    <property type="match status" value="1"/>
</dbReference>
<dbReference type="FunFam" id="3.40.120.10:FF:000002">
    <property type="entry name" value="Phosphoglucosamine mutase"/>
    <property type="match status" value="1"/>
</dbReference>
<dbReference type="Gene3D" id="3.40.120.10">
    <property type="entry name" value="Alpha-D-Glucose-1,6-Bisphosphate, subunit A, domain 3"/>
    <property type="match status" value="3"/>
</dbReference>
<dbReference type="Gene3D" id="3.30.310.50">
    <property type="entry name" value="Alpha-D-phosphohexomutase, C-terminal domain"/>
    <property type="match status" value="1"/>
</dbReference>
<dbReference type="HAMAP" id="MF_01554_B">
    <property type="entry name" value="GlmM_B"/>
    <property type="match status" value="1"/>
</dbReference>
<dbReference type="InterPro" id="IPR005844">
    <property type="entry name" value="A-D-PHexomutase_a/b/a-I"/>
</dbReference>
<dbReference type="InterPro" id="IPR016055">
    <property type="entry name" value="A-D-PHexomutase_a/b/a-I/II/III"/>
</dbReference>
<dbReference type="InterPro" id="IPR005845">
    <property type="entry name" value="A-D-PHexomutase_a/b/a-II"/>
</dbReference>
<dbReference type="InterPro" id="IPR005846">
    <property type="entry name" value="A-D-PHexomutase_a/b/a-III"/>
</dbReference>
<dbReference type="InterPro" id="IPR005843">
    <property type="entry name" value="A-D-PHexomutase_C"/>
</dbReference>
<dbReference type="InterPro" id="IPR036900">
    <property type="entry name" value="A-D-PHexomutase_C_sf"/>
</dbReference>
<dbReference type="InterPro" id="IPR016066">
    <property type="entry name" value="A-D-PHexomutase_CS"/>
</dbReference>
<dbReference type="InterPro" id="IPR005841">
    <property type="entry name" value="Alpha-D-phosphohexomutase_SF"/>
</dbReference>
<dbReference type="InterPro" id="IPR006352">
    <property type="entry name" value="GlmM_bact"/>
</dbReference>
<dbReference type="InterPro" id="IPR050060">
    <property type="entry name" value="Phosphoglucosamine_mutase"/>
</dbReference>
<dbReference type="NCBIfam" id="TIGR01455">
    <property type="entry name" value="glmM"/>
    <property type="match status" value="1"/>
</dbReference>
<dbReference type="NCBIfam" id="NF008139">
    <property type="entry name" value="PRK10887.1"/>
    <property type="match status" value="1"/>
</dbReference>
<dbReference type="PANTHER" id="PTHR42946:SF1">
    <property type="entry name" value="PHOSPHOGLUCOMUTASE (ALPHA-D-GLUCOSE-1,6-BISPHOSPHATE-DEPENDENT)"/>
    <property type="match status" value="1"/>
</dbReference>
<dbReference type="PANTHER" id="PTHR42946">
    <property type="entry name" value="PHOSPHOHEXOSE MUTASE"/>
    <property type="match status" value="1"/>
</dbReference>
<dbReference type="Pfam" id="PF02878">
    <property type="entry name" value="PGM_PMM_I"/>
    <property type="match status" value="1"/>
</dbReference>
<dbReference type="Pfam" id="PF02879">
    <property type="entry name" value="PGM_PMM_II"/>
    <property type="match status" value="1"/>
</dbReference>
<dbReference type="Pfam" id="PF02880">
    <property type="entry name" value="PGM_PMM_III"/>
    <property type="match status" value="1"/>
</dbReference>
<dbReference type="Pfam" id="PF00408">
    <property type="entry name" value="PGM_PMM_IV"/>
    <property type="match status" value="1"/>
</dbReference>
<dbReference type="PRINTS" id="PR00509">
    <property type="entry name" value="PGMPMM"/>
</dbReference>
<dbReference type="SUPFAM" id="SSF55957">
    <property type="entry name" value="Phosphoglucomutase, C-terminal domain"/>
    <property type="match status" value="1"/>
</dbReference>
<dbReference type="SUPFAM" id="SSF53738">
    <property type="entry name" value="Phosphoglucomutase, first 3 domains"/>
    <property type="match status" value="3"/>
</dbReference>
<dbReference type="PROSITE" id="PS00710">
    <property type="entry name" value="PGM_PMM"/>
    <property type="match status" value="1"/>
</dbReference>
<feature type="chain" id="PRO_1000087783" description="Phosphoglucosamine mutase">
    <location>
        <begin position="1"/>
        <end position="450"/>
    </location>
</feature>
<feature type="active site" description="Phosphoserine intermediate" evidence="1">
    <location>
        <position position="101"/>
    </location>
</feature>
<feature type="binding site" description="via phosphate group" evidence="1">
    <location>
        <position position="101"/>
    </location>
    <ligand>
        <name>Mg(2+)</name>
        <dbReference type="ChEBI" id="CHEBI:18420"/>
    </ligand>
</feature>
<feature type="binding site" evidence="1">
    <location>
        <position position="240"/>
    </location>
    <ligand>
        <name>Mg(2+)</name>
        <dbReference type="ChEBI" id="CHEBI:18420"/>
    </ligand>
</feature>
<feature type="binding site" evidence="1">
    <location>
        <position position="242"/>
    </location>
    <ligand>
        <name>Mg(2+)</name>
        <dbReference type="ChEBI" id="CHEBI:18420"/>
    </ligand>
</feature>
<feature type="binding site" evidence="1">
    <location>
        <position position="244"/>
    </location>
    <ligand>
        <name>Mg(2+)</name>
        <dbReference type="ChEBI" id="CHEBI:18420"/>
    </ligand>
</feature>
<feature type="modified residue" description="Phosphoserine" evidence="1">
    <location>
        <position position="101"/>
    </location>
</feature>
<proteinExistence type="inferred from homology"/>
<evidence type="ECO:0000255" key="1">
    <source>
        <dbReference type="HAMAP-Rule" id="MF_01554"/>
    </source>
</evidence>
<accession>A8AWM5</accession>
<comment type="function">
    <text evidence="1">Catalyzes the conversion of glucosamine-6-phosphate to glucosamine-1-phosphate.</text>
</comment>
<comment type="catalytic activity">
    <reaction evidence="1">
        <text>alpha-D-glucosamine 1-phosphate = D-glucosamine 6-phosphate</text>
        <dbReference type="Rhea" id="RHEA:23424"/>
        <dbReference type="ChEBI" id="CHEBI:58516"/>
        <dbReference type="ChEBI" id="CHEBI:58725"/>
        <dbReference type="EC" id="5.4.2.10"/>
    </reaction>
</comment>
<comment type="cofactor">
    <cofactor evidence="1">
        <name>Mg(2+)</name>
        <dbReference type="ChEBI" id="CHEBI:18420"/>
    </cofactor>
    <text evidence="1">Binds 1 Mg(2+) ion per subunit.</text>
</comment>
<comment type="PTM">
    <text evidence="1">Activated by phosphorylation.</text>
</comment>
<comment type="similarity">
    <text evidence="1">Belongs to the phosphohexose mutase family.</text>
</comment>
<sequence>MGKYFGTDGVRGEANVELTPELAFKLGRFGGYVLSQHESEVPKVFVGRDTRISGEMLESALIAGLLSVGIHVYKLGVIATPGVAYLVKSEKASAGVMISASHNPALDNGIKFFGGDGYKLDDDRELEIEALLDATEDTLPRPSAEGLGTLVDYPEGLRKYQQYLVSTGLELEGMHVALDTANGAASTSARQIFADLGAQLTVIGENPDGLNINLNVGSTHPEALQEVVRESGAAIGLAFDGDSDRLIAVDENGELVDGDKIMYIIGKYLSEKGQLAQNTIVTTVMSNLGFHKALDREGIQKAVTAVGDRYVVEEMRQSGYNLGGEQSGHVIIMDYNTTGDGQLTAVQLTKIMKETGKKLSELASEVTIYPQKLVNIRVENSMKDKAMEVPAIKSIIEEMEAKMAGNGRILVRPSGTEPLLRVMAEAPSHEEVDFYVDTIADVVRAEIGIE</sequence>
<reference key="1">
    <citation type="journal article" date="2007" name="J. Bacteriol.">
        <title>Genome-wide transcriptional changes in Streptococcus gordonii in response to competence signaling peptide.</title>
        <authorList>
            <person name="Vickerman M.M."/>
            <person name="Iobst S."/>
            <person name="Jesionowski A.M."/>
            <person name="Gill S.R."/>
        </authorList>
    </citation>
    <scope>NUCLEOTIDE SEQUENCE [LARGE SCALE GENOMIC DNA]</scope>
    <source>
        <strain>Challis / ATCC 35105 / BCRC 15272 / CH1 / DL1 / V288</strain>
    </source>
</reference>